<keyword id="KW-0002">3D-structure</keyword>
<keyword id="KW-0903">Direct protein sequencing</keyword>
<keyword id="KW-0539">Nucleus</keyword>
<keyword id="KW-0597">Phosphoprotein</keyword>
<keyword id="KW-1267">Proteomics identification</keyword>
<keyword id="KW-1185">Reference proteome</keyword>
<keyword id="KW-0677">Repeat</keyword>
<keyword id="KW-0678">Repressor</keyword>
<keyword id="KW-0804">Transcription</keyword>
<keyword id="KW-0805">Transcription regulation</keyword>
<keyword id="KW-0832">Ubl conjugation</keyword>
<keyword id="KW-0853">WD repeat</keyword>
<keyword id="KW-0879">Wnt signaling pathway</keyword>
<feature type="chain" id="PRO_0000051276" description="Transducin-like enhancer protein 1">
    <location>
        <begin position="1"/>
        <end position="770"/>
    </location>
</feature>
<feature type="repeat" description="WD 1">
    <location>
        <begin position="470"/>
        <end position="501"/>
    </location>
</feature>
<feature type="repeat" description="WD 2">
    <location>
        <begin position="528"/>
        <end position="558"/>
    </location>
</feature>
<feature type="repeat" description="WD 3">
    <location>
        <begin position="572"/>
        <end position="602"/>
    </location>
</feature>
<feature type="repeat" description="WD 4">
    <location>
        <begin position="614"/>
        <end position="644"/>
    </location>
</feature>
<feature type="repeat" description="WD 5">
    <location>
        <begin position="696"/>
        <end position="726"/>
    </location>
</feature>
<feature type="repeat" description="WD 6">
    <location>
        <begin position="737"/>
        <end position="767"/>
    </location>
</feature>
<feature type="region of interest" description="Q domain" evidence="20">
    <location>
        <begin position="1"/>
        <end position="131"/>
    </location>
</feature>
<feature type="region of interest" description="Disordered" evidence="3">
    <location>
        <begin position="128"/>
        <end position="157"/>
    </location>
</feature>
<feature type="region of interest" description="GP domain" evidence="20">
    <location>
        <begin position="132"/>
        <end position="199"/>
    </location>
</feature>
<feature type="region of interest" description="Disordered" evidence="3">
    <location>
        <begin position="176"/>
        <end position="348"/>
    </location>
</feature>
<feature type="region of interest" description="CcN domain" evidence="20">
    <location>
        <begin position="200"/>
        <end position="268"/>
    </location>
</feature>
<feature type="region of interest" description="SP domain" evidence="20">
    <location>
        <begin position="269"/>
        <end position="450"/>
    </location>
</feature>
<feature type="short sequence motif" description="Nuclear localization signal" evidence="2">
    <location>
        <begin position="225"/>
        <end position="228"/>
    </location>
</feature>
<feature type="compositionally biased region" description="Basic and acidic residues" evidence="3">
    <location>
        <begin position="178"/>
        <end position="196"/>
    </location>
</feature>
<feature type="compositionally biased region" description="Basic and acidic residues" evidence="3">
    <location>
        <begin position="209"/>
        <end position="246"/>
    </location>
</feature>
<feature type="compositionally biased region" description="Low complexity" evidence="3">
    <location>
        <begin position="257"/>
        <end position="266"/>
    </location>
</feature>
<feature type="compositionally biased region" description="Basic and acidic residues" evidence="3">
    <location>
        <begin position="267"/>
        <end position="283"/>
    </location>
</feature>
<feature type="compositionally biased region" description="Low complexity" evidence="3">
    <location>
        <begin position="284"/>
        <end position="298"/>
    </location>
</feature>
<feature type="compositionally biased region" description="Basic and acidic residues" evidence="3">
    <location>
        <begin position="300"/>
        <end position="310"/>
    </location>
</feature>
<feature type="modified residue" description="Phosphoserine" evidence="21">
    <location>
        <position position="239"/>
    </location>
</feature>
<feature type="modified residue" description="Phosphoserine; by CDK1" evidence="2">
    <location>
        <position position="259"/>
    </location>
</feature>
<feature type="modified residue" description="Phosphoserine; by CDK1" evidence="2">
    <location>
        <position position="263"/>
    </location>
</feature>
<feature type="modified residue" description="Phosphoserine; by CDK1" evidence="2">
    <location>
        <position position="267"/>
    </location>
</feature>
<feature type="modified residue" description="Phosphoserine" evidence="21">
    <location>
        <position position="286"/>
    </location>
</feature>
<feature type="mutagenesis site" description="Abolishes HESX1 binding." evidence="6">
    <original>V</original>
    <variation>S</variation>
    <location>
        <position position="486"/>
    </location>
</feature>
<feature type="mutagenesis site" description="Abolishes HESX1 binding." evidence="6">
    <original>Y</original>
    <variation>H</variation>
    <location>
        <position position="532"/>
    </location>
</feature>
<feature type="mutagenesis site" description="Abolishes HESX1 binding." evidence="6">
    <original>L</original>
    <variation>S</variation>
    <location>
        <position position="702"/>
    </location>
</feature>
<feature type="mutagenesis site" description="Abolishes HESX1 binding." evidence="6">
    <original>S</original>
    <variation>P</variation>
    <location>
        <position position="715"/>
    </location>
</feature>
<feature type="sequence conflict" description="In Ref. 1; AAA61192." evidence="18" ref="1">
    <original>AAAVVA</original>
    <variation>RGRRGR</variation>
    <location>
        <begin position="407"/>
        <end position="412"/>
    </location>
</feature>
<feature type="sequence conflict" description="In Ref. 1; AAA61192." evidence="18" ref="1">
    <original>DA</original>
    <variation>TP</variation>
    <location>
        <begin position="464"/>
        <end position="465"/>
    </location>
</feature>
<feature type="helix" evidence="24">
    <location>
        <begin position="22"/>
        <end position="92"/>
    </location>
</feature>
<feature type="helix" evidence="24">
    <location>
        <begin position="93"/>
        <end position="95"/>
    </location>
</feature>
<feature type="helix" evidence="24">
    <location>
        <begin position="98"/>
        <end position="111"/>
    </location>
</feature>
<feature type="helix" evidence="24">
    <location>
        <begin position="116"/>
        <end position="133"/>
    </location>
</feature>
<feature type="strand" evidence="22">
    <location>
        <begin position="436"/>
        <end position="444"/>
    </location>
</feature>
<feature type="strand" evidence="22">
    <location>
        <begin position="447"/>
        <end position="450"/>
    </location>
</feature>
<feature type="strand" evidence="22">
    <location>
        <begin position="452"/>
        <end position="454"/>
    </location>
</feature>
<feature type="strand" evidence="22">
    <location>
        <begin position="456"/>
        <end position="458"/>
    </location>
</feature>
<feature type="strand" evidence="22">
    <location>
        <begin position="465"/>
        <end position="468"/>
    </location>
</feature>
<feature type="strand" evidence="22">
    <location>
        <begin position="473"/>
        <end position="481"/>
    </location>
</feature>
<feature type="strand" evidence="22">
    <location>
        <begin position="489"/>
        <end position="492"/>
    </location>
</feature>
<feature type="strand" evidence="22">
    <location>
        <begin position="494"/>
        <end position="502"/>
    </location>
</feature>
<feature type="strand" evidence="22">
    <location>
        <begin position="504"/>
        <end position="511"/>
    </location>
</feature>
<feature type="strand" evidence="22">
    <location>
        <begin position="521"/>
        <end position="525"/>
    </location>
</feature>
<feature type="strand" evidence="22">
    <location>
        <begin position="531"/>
        <end position="538"/>
    </location>
</feature>
<feature type="strand" evidence="22">
    <location>
        <begin position="542"/>
        <end position="558"/>
    </location>
</feature>
<feature type="strand" evidence="23">
    <location>
        <begin position="560"/>
        <end position="563"/>
    </location>
</feature>
<feature type="strand" evidence="22">
    <location>
        <begin position="565"/>
        <end position="571"/>
    </location>
</feature>
<feature type="strand" evidence="22">
    <location>
        <begin position="573"/>
        <end position="575"/>
    </location>
</feature>
<feature type="strand" evidence="22">
    <location>
        <begin position="577"/>
        <end position="582"/>
    </location>
</feature>
<feature type="strand" evidence="22">
    <location>
        <begin position="586"/>
        <end position="593"/>
    </location>
</feature>
<feature type="strand" evidence="22">
    <location>
        <begin position="598"/>
        <end position="602"/>
    </location>
</feature>
<feature type="turn" evidence="22">
    <location>
        <begin position="603"/>
        <end position="606"/>
    </location>
</feature>
<feature type="strand" evidence="22">
    <location>
        <begin position="607"/>
        <end position="612"/>
    </location>
</feature>
<feature type="strand" evidence="22">
    <location>
        <begin position="619"/>
        <end position="624"/>
    </location>
</feature>
<feature type="strand" evidence="22">
    <location>
        <begin position="628"/>
        <end position="635"/>
    </location>
</feature>
<feature type="strand" evidence="22">
    <location>
        <begin position="638"/>
        <end position="644"/>
    </location>
</feature>
<feature type="turn" evidence="22">
    <location>
        <begin position="645"/>
        <end position="648"/>
    </location>
</feature>
<feature type="strand" evidence="22">
    <location>
        <begin position="649"/>
        <end position="655"/>
    </location>
</feature>
<feature type="strand" evidence="22">
    <location>
        <begin position="660"/>
        <end position="665"/>
    </location>
</feature>
<feature type="strand" evidence="22">
    <location>
        <begin position="669"/>
        <end position="676"/>
    </location>
</feature>
<feature type="strand" evidence="22">
    <location>
        <begin position="681"/>
        <end position="685"/>
    </location>
</feature>
<feature type="strand" evidence="22">
    <location>
        <begin position="691"/>
        <end position="694"/>
    </location>
</feature>
<feature type="strand" evidence="22">
    <location>
        <begin position="701"/>
        <end position="706"/>
    </location>
</feature>
<feature type="strand" evidence="22">
    <location>
        <begin position="710"/>
        <end position="717"/>
    </location>
</feature>
<feature type="strand" evidence="22">
    <location>
        <begin position="720"/>
        <end position="726"/>
    </location>
</feature>
<feature type="turn" evidence="22">
    <location>
        <begin position="727"/>
        <end position="729"/>
    </location>
</feature>
<feature type="strand" evidence="22">
    <location>
        <begin position="732"/>
        <end position="737"/>
    </location>
</feature>
<feature type="strand" evidence="22">
    <location>
        <begin position="742"/>
        <end position="747"/>
    </location>
</feature>
<feature type="strand" evidence="22">
    <location>
        <begin position="753"/>
        <end position="758"/>
    </location>
</feature>
<feature type="strand" evidence="22">
    <location>
        <begin position="763"/>
        <end position="769"/>
    </location>
</feature>
<name>TLE1_HUMAN</name>
<sequence>MFPQSRHPTPHQAAGQPFKFTIPESLDRIKEEFQFLQAQYHSLKLECEKLASEKTEMQRHYVMYYEMSYGLNIEMHKQTEIAKRLNTICAQVIPFLSQEHQQQVAQAVERAKQVTMAELNAIIGQQQLQAQHLSHGHGPPVPLTPHPSGLQPPGIPPLGGSAGLLALSSALSGQSHLAIKDDKKHHDAEHHRDREPGTSNSLLVPDSLRGTDKRRNGPEFSNDIKKRKVDDKDSSHYDSDGDKSDDNLVVDVSNEDPSSPRASPAHSPRENGIDKNRLLKKDASSSPASTASSASSTSLKSKEMSLHEKASTPVLKSSTPTPRSDMPTPGTSATPGLRPGLGKPPAIDPLVNQAAAGLRTPLAVPGPYPAPFGMVPHAGMNGELTSPGAAYASLHNMSPQMSAAAAAAAVVAYGRSPMVGFDPPPHMRVPTIPPNLAGIPGGKPAYSFHVTADGQMQPVPFPPDALIGPGIPRHARQINTLNHGEVVCAVTISNPTRHVYTGGKGCVKVWDISHPGNKSPVSQLDCLNRDNYIRSCKLLPDGCTLIVGGEASTLSIWDLAAPTPRIKAELTSSAPACYALAISPDSKVCFSCCSDGNIAVWDLHNQTLVRQFQGHTDGASCIDISNDGTKLWTGGLDNTVRSWDLREGRQLQQHDFTSQIFSLGYCPTGEWLAVGMESSNVEVLHVNKPDKYQLHLHESCVLSLKFAYCGKWFVSTGKDNLLNAWRTPYGASIFQSKESSSVLSCDISVDDKYIVTGSGDKKATVYEVIY</sequence>
<accession>Q04724</accession>
<accession>A8K495</accession>
<accession>Q5T3G4</accession>
<accession>Q969V9</accession>
<comment type="function">
    <text evidence="1 4">Transcriptional corepressor that binds to a number of transcription factors. Inhibits NF-kappa-B-regulated gene expression. Inhibits the transcriptional activation mediated by FOXA2, and by CTNNB1 and TCF family members in Wnt signaling. Enhances FOXG1/BF-1- and HES1-mediated transcriptional repression (By similarity). The effects of full-length TLE family members may be modulated by association with dominant-negative AES. Unusual function as coactivator for ESRRG.</text>
</comment>
<comment type="subunit">
    <text evidence="1 4 5 6 8 9 10 12 13 14 15 16 17">Homooligomer and heterooligomer with other family members. Binds RUNX1, RUNX3, FOXA2, KDM6A, UTY, histone H3, HESX1, ESRRG and the NF-kappa-B subunit RELA. Interacts with HES1 (via WRPW motif). Binds TCF7, LEF1, TCF7L1 and TCF7L2 (By similarity). Interacts with SIX3. Interacts with EFNB1. Interacts with TLE4 (By similarity). Interacts with FOXG1/BF-1; the interaction is inhibited by TLE6/GRG6 (By similarity).</text>
</comment>
<comment type="interaction">
    <interactant intactId="EBI-711424">
        <id>Q04724</id>
    </interactant>
    <interactant intactId="EBI-702390">
        <id>Q9UBB4</id>
        <label>ATXN10</label>
    </interactant>
    <organismsDiffer>false</organismsDiffer>
    <experiments>3</experiments>
</comment>
<comment type="interaction">
    <interactant intactId="EBI-711424">
        <id>Q04724</id>
    </interactant>
    <interactant intactId="EBI-724310">
        <id>Q15038</id>
        <label>DAZAP2</label>
    </interactant>
    <organismsDiffer>false</organismsDiffer>
    <experiments>3</experiments>
</comment>
<comment type="interaction">
    <interactant intactId="EBI-711424">
        <id>Q04724</id>
    </interactant>
    <interactant intactId="EBI-715416">
        <id>P55316</id>
        <label>FOXG1</label>
    </interactant>
    <organismsDiffer>false</organismsDiffer>
    <experiments>2</experiments>
</comment>
<comment type="interaction">
    <interactant intactId="EBI-711424">
        <id>Q04724</id>
    </interactant>
    <interactant intactId="EBI-747754">
        <id>P28799</id>
        <label>GRN</label>
    </interactant>
    <organismsDiffer>false</organismsDiffer>
    <experiments>3</experiments>
</comment>
<comment type="interaction">
    <interactant intactId="EBI-711424">
        <id>Q04724</id>
    </interactant>
    <interactant intactId="EBI-302023">
        <id>P62805</id>
        <label>H4C9</label>
    </interactant>
    <organismsDiffer>false</organismsDiffer>
    <experiments>6</experiments>
</comment>
<comment type="interaction">
    <interactant intactId="EBI-711424">
        <id>Q04724</id>
    </interactant>
    <interactant intactId="EBI-7469266">
        <id>Q96HZ4</id>
        <label>HES6</label>
    </interactant>
    <organismsDiffer>false</organismsDiffer>
    <experiments>3</experiments>
</comment>
<comment type="interaction">
    <interactant intactId="EBI-711424">
        <id>Q04724</id>
    </interactant>
    <interactant intactId="EBI-7133736">
        <id>P07686</id>
        <label>HEXB</label>
    </interactant>
    <organismsDiffer>false</organismsDiffer>
    <experiments>3</experiments>
</comment>
<comment type="interaction">
    <interactant intactId="EBI-711424">
        <id>Q04724</id>
    </interactant>
    <interactant intactId="EBI-7445625">
        <id>Q9HC29</id>
        <label>NOD2</label>
    </interactant>
    <organismsDiffer>false</organismsDiffer>
    <experiments>2</experiments>
</comment>
<comment type="interaction">
    <interactant intactId="EBI-711424">
        <id>Q04724</id>
    </interactant>
    <interactant intactId="EBI-21251460">
        <id>O60260-5</id>
        <label>PRKN</label>
    </interactant>
    <organismsDiffer>false</organismsDiffer>
    <experiments>3</experiments>
</comment>
<comment type="interaction">
    <interactant intactId="EBI-711424">
        <id>Q04724</id>
    </interactant>
    <interactant intactId="EBI-396669">
        <id>Q9Y3C5</id>
        <label>RNF11</label>
    </interactant>
    <organismsDiffer>false</organismsDiffer>
    <experiments>3</experiments>
</comment>
<comment type="interaction">
    <interactant intactId="EBI-711424">
        <id>Q04724</id>
    </interactant>
    <interactant intactId="EBI-925940">
        <id>Q01196-1</id>
        <label>RUNX1</label>
    </interactant>
    <organismsDiffer>false</organismsDiffer>
    <experiments>4</experiments>
</comment>
<comment type="interaction">
    <interactant intactId="EBI-711424">
        <id>Q04724</id>
    </interactant>
    <interactant intactId="EBI-925944">
        <id>Q01196-2</id>
        <label>RUNX1</label>
    </interactant>
    <organismsDiffer>false</organismsDiffer>
    <experiments>3</experiments>
</comment>
<comment type="interaction">
    <interactant intactId="EBI-711424">
        <id>Q04724</id>
    </interactant>
    <interactant intactId="EBI-925990">
        <id>Q13761</id>
        <label>RUNX3</label>
    </interactant>
    <organismsDiffer>false</organismsDiffer>
    <experiments>3</experiments>
</comment>
<comment type="interaction">
    <interactant intactId="EBI-711424">
        <id>Q04724</id>
    </interactant>
    <interactant intactId="EBI-1802965">
        <id>Q96EB6</id>
        <label>SIRT1</label>
    </interactant>
    <organismsDiffer>false</organismsDiffer>
    <experiments>4</experiments>
</comment>
<comment type="interaction">
    <interactant intactId="EBI-711424">
        <id>Q04724</id>
    </interactant>
    <interactant intactId="EBI-6050533">
        <id>A4PIW0</id>
        <label>SYT-SSX2</label>
    </interactant>
    <organismsDiffer>false</organismsDiffer>
    <experiments>11</experiments>
</comment>
<comment type="interaction">
    <interactant intactId="EBI-711424">
        <id>Q04724</id>
    </interactant>
    <interactant intactId="EBI-711424">
        <id>Q04724</id>
        <label>TLE1</label>
    </interactant>
    <organismsDiffer>false</organismsDiffer>
    <experiments>4</experiments>
</comment>
<comment type="subcellular location">
    <subcellularLocation>
        <location evidence="7">Nucleus</location>
    </subcellularLocation>
    <text>Nuclear and chromatin-associated, depending on isoforms and phosphorylation status. Hyperphosphorylation decreases the affinity for nuclear components.</text>
</comment>
<comment type="tissue specificity">
    <text>In all tissues examined, mostly in brain, liver and muscle.</text>
</comment>
<comment type="domain">
    <text evidence="19">WD repeat Groucho/TLE family members are characterized by 5 regions, a glutamine-rich Q domain, a glycine/proline-rich GP domain, a central CcN domain, containing a nuclear localization signal, and a serine/proline-rich SP domain. The most highly conserved are the N-terminal Q domain and the C-terminal WD-repeat domain.</text>
</comment>
<comment type="PTM">
    <text>Phosphorylated, probably by CDK1. The degree of phosphorylation varies throughout the cell cycle, and is highest at the G2/M transition. Becomes hyperphosphorylated in response to cell differentiation and interaction with HES1 or RUNX1.</text>
</comment>
<comment type="PTM">
    <text evidence="11">Ubiquitinated by XIAP/BIRC4.</text>
</comment>
<comment type="similarity">
    <text evidence="18">Belongs to the WD repeat Groucho/TLE family.</text>
</comment>
<gene>
    <name type="primary">TLE1</name>
</gene>
<proteinExistence type="evidence at protein level"/>
<dbReference type="EMBL" id="M99435">
    <property type="protein sequence ID" value="AAA61192.1"/>
    <property type="molecule type" value="mRNA"/>
</dbReference>
<dbReference type="EMBL" id="AK290860">
    <property type="protein sequence ID" value="BAF83549.1"/>
    <property type="molecule type" value="mRNA"/>
</dbReference>
<dbReference type="EMBL" id="AL365190">
    <property type="status" value="NOT_ANNOTATED_CDS"/>
    <property type="molecule type" value="Genomic_DNA"/>
</dbReference>
<dbReference type="EMBL" id="AL353682">
    <property type="status" value="NOT_ANNOTATED_CDS"/>
    <property type="molecule type" value="Genomic_DNA"/>
</dbReference>
<dbReference type="EMBL" id="CH471089">
    <property type="protein sequence ID" value="EAW62636.1"/>
    <property type="molecule type" value="Genomic_DNA"/>
</dbReference>
<dbReference type="EMBL" id="BC010100">
    <property type="protein sequence ID" value="AAH10100.1"/>
    <property type="molecule type" value="mRNA"/>
</dbReference>
<dbReference type="EMBL" id="BC015747">
    <property type="protein sequence ID" value="AAH15747.1"/>
    <property type="molecule type" value="mRNA"/>
</dbReference>
<dbReference type="CCDS" id="CCDS6661.1"/>
<dbReference type="PIR" id="B56695">
    <property type="entry name" value="B56695"/>
</dbReference>
<dbReference type="RefSeq" id="NP_001290032.1">
    <property type="nucleotide sequence ID" value="NM_001303103.1"/>
</dbReference>
<dbReference type="RefSeq" id="NP_001290033.1">
    <property type="nucleotide sequence ID" value="NM_001303104.1"/>
</dbReference>
<dbReference type="RefSeq" id="NP_005068.2">
    <property type="nucleotide sequence ID" value="NM_005077.4"/>
</dbReference>
<dbReference type="PDB" id="1GXR">
    <property type="method" value="X-ray"/>
    <property type="resolution" value="1.65 A"/>
    <property type="chains" value="A/B=443-770"/>
</dbReference>
<dbReference type="PDB" id="2CE8">
    <property type="method" value="X-ray"/>
    <property type="resolution" value="2.03 A"/>
    <property type="chains" value="A/B/C/D=443-770"/>
</dbReference>
<dbReference type="PDB" id="2CE9">
    <property type="method" value="X-ray"/>
    <property type="resolution" value="2.12 A"/>
    <property type="chains" value="A/B/C/D=443-770"/>
</dbReference>
<dbReference type="PDB" id="4OM2">
    <property type="method" value="X-ray"/>
    <property type="resolution" value="4.00 A"/>
    <property type="chains" value="A/B/C/D=1-156"/>
</dbReference>
<dbReference type="PDB" id="4OM3">
    <property type="method" value="X-ray"/>
    <property type="resolution" value="2.86 A"/>
    <property type="chains" value="A/B/C/D=15-156"/>
</dbReference>
<dbReference type="PDB" id="5MWJ">
    <property type="method" value="X-ray"/>
    <property type="resolution" value="2.04 A"/>
    <property type="chains" value="A/B=443-770"/>
</dbReference>
<dbReference type="PDBsum" id="1GXR"/>
<dbReference type="PDBsum" id="2CE8"/>
<dbReference type="PDBsum" id="2CE9"/>
<dbReference type="PDBsum" id="4OM2"/>
<dbReference type="PDBsum" id="4OM3"/>
<dbReference type="PDBsum" id="5MWJ"/>
<dbReference type="SMR" id="Q04724"/>
<dbReference type="BioGRID" id="112943">
    <property type="interactions" value="221"/>
</dbReference>
<dbReference type="CORUM" id="Q04724"/>
<dbReference type="DIP" id="DIP-36665N"/>
<dbReference type="FunCoup" id="Q04724">
    <property type="interactions" value="3252"/>
</dbReference>
<dbReference type="IntAct" id="Q04724">
    <property type="interactions" value="167"/>
</dbReference>
<dbReference type="MINT" id="Q04724"/>
<dbReference type="STRING" id="9606.ENSP00000365682"/>
<dbReference type="GlyGen" id="Q04724">
    <property type="glycosylation" value="5 sites, 1 O-linked glycan (3 sites)"/>
</dbReference>
<dbReference type="iPTMnet" id="Q04724"/>
<dbReference type="PhosphoSitePlus" id="Q04724"/>
<dbReference type="BioMuta" id="TLE1"/>
<dbReference type="DMDM" id="29840816"/>
<dbReference type="CPTAC" id="CPTAC-1189"/>
<dbReference type="jPOST" id="Q04724"/>
<dbReference type="MassIVE" id="Q04724"/>
<dbReference type="PaxDb" id="9606-ENSP00000365682"/>
<dbReference type="PeptideAtlas" id="Q04724"/>
<dbReference type="ProteomicsDB" id="58266"/>
<dbReference type="Pumba" id="Q04724"/>
<dbReference type="Antibodypedia" id="3147">
    <property type="antibodies" value="621 antibodies from 36 providers"/>
</dbReference>
<dbReference type="DNASU" id="7088"/>
<dbReference type="Ensembl" id="ENST00000376499.8">
    <property type="protein sequence ID" value="ENSP00000365682.3"/>
    <property type="gene ID" value="ENSG00000196781.16"/>
</dbReference>
<dbReference type="GeneID" id="7088"/>
<dbReference type="KEGG" id="hsa:7088"/>
<dbReference type="MANE-Select" id="ENST00000376499.8">
    <property type="protein sequence ID" value="ENSP00000365682.3"/>
    <property type="RefSeq nucleotide sequence ID" value="NM_005077.5"/>
    <property type="RefSeq protein sequence ID" value="NP_005068.2"/>
</dbReference>
<dbReference type="UCSC" id="uc004aly.4">
    <property type="organism name" value="human"/>
</dbReference>
<dbReference type="AGR" id="HGNC:11837"/>
<dbReference type="CTD" id="7088"/>
<dbReference type="DisGeNET" id="7088"/>
<dbReference type="GeneCards" id="TLE1"/>
<dbReference type="HGNC" id="HGNC:11837">
    <property type="gene designation" value="TLE1"/>
</dbReference>
<dbReference type="HPA" id="ENSG00000196781">
    <property type="expression patterns" value="Low tissue specificity"/>
</dbReference>
<dbReference type="MIM" id="600189">
    <property type="type" value="gene"/>
</dbReference>
<dbReference type="neXtProt" id="NX_Q04724"/>
<dbReference type="OpenTargets" id="ENSG00000196781"/>
<dbReference type="PharmGKB" id="PA36539"/>
<dbReference type="VEuPathDB" id="HostDB:ENSG00000196781"/>
<dbReference type="eggNOG" id="KOG0639">
    <property type="taxonomic scope" value="Eukaryota"/>
</dbReference>
<dbReference type="GeneTree" id="ENSGT01030000234519"/>
<dbReference type="HOGENOM" id="CLU_007612_3_0_1"/>
<dbReference type="InParanoid" id="Q04724"/>
<dbReference type="OMA" id="ETQHGKI"/>
<dbReference type="OrthoDB" id="2624652at2759"/>
<dbReference type="PAN-GO" id="Q04724">
    <property type="GO annotations" value="4 GO annotations based on evolutionary models"/>
</dbReference>
<dbReference type="PhylomeDB" id="Q04724"/>
<dbReference type="TreeFam" id="TF314167"/>
<dbReference type="PathwayCommons" id="Q04724"/>
<dbReference type="Reactome" id="R-HSA-201722">
    <property type="pathway name" value="Formation of the beta-catenin:TCF transactivating complex"/>
</dbReference>
<dbReference type="Reactome" id="R-HSA-2122947">
    <property type="pathway name" value="NOTCH1 Intracellular Domain Regulates Transcription"/>
</dbReference>
<dbReference type="Reactome" id="R-HSA-3769402">
    <property type="pathway name" value="Deactivation of the beta-catenin transactivating complex"/>
</dbReference>
<dbReference type="Reactome" id="R-HSA-4641265">
    <property type="pathway name" value="Repression of WNT target genes"/>
</dbReference>
<dbReference type="SignaLink" id="Q04724"/>
<dbReference type="SIGNOR" id="Q04724"/>
<dbReference type="BioGRID-ORCS" id="7088">
    <property type="hits" value="23 hits in 1164 CRISPR screens"/>
</dbReference>
<dbReference type="ChiTaRS" id="TLE1">
    <property type="organism name" value="human"/>
</dbReference>
<dbReference type="EvolutionaryTrace" id="Q04724"/>
<dbReference type="GeneWiki" id="TLE1"/>
<dbReference type="GenomeRNAi" id="7088"/>
<dbReference type="Pharos" id="Q04724">
    <property type="development level" value="Tbio"/>
</dbReference>
<dbReference type="PRO" id="PR:Q04724"/>
<dbReference type="Proteomes" id="UP000005640">
    <property type="component" value="Chromosome 9"/>
</dbReference>
<dbReference type="RNAct" id="Q04724">
    <property type="molecule type" value="protein"/>
</dbReference>
<dbReference type="Bgee" id="ENSG00000196781">
    <property type="expression patterns" value="Expressed in ventricular zone and 212 other cell types or tissues"/>
</dbReference>
<dbReference type="ExpressionAtlas" id="Q04724">
    <property type="expression patterns" value="baseline and differential"/>
</dbReference>
<dbReference type="GO" id="GO:1990907">
    <property type="term" value="C:beta-catenin-TCF complex"/>
    <property type="evidence" value="ECO:0000314"/>
    <property type="project" value="FlyBase"/>
</dbReference>
<dbReference type="GO" id="GO:0005829">
    <property type="term" value="C:cytosol"/>
    <property type="evidence" value="ECO:0000315"/>
    <property type="project" value="UniProtKB"/>
</dbReference>
<dbReference type="GO" id="GO:0005654">
    <property type="term" value="C:nucleoplasm"/>
    <property type="evidence" value="ECO:0000314"/>
    <property type="project" value="HPA"/>
</dbReference>
<dbReference type="GO" id="GO:0005634">
    <property type="term" value="C:nucleus"/>
    <property type="evidence" value="ECO:0000314"/>
    <property type="project" value="BHF-UCL"/>
</dbReference>
<dbReference type="GO" id="GO:0005667">
    <property type="term" value="C:transcription regulator complex"/>
    <property type="evidence" value="ECO:0000318"/>
    <property type="project" value="GO_Central"/>
</dbReference>
<dbReference type="GO" id="GO:0140297">
    <property type="term" value="F:DNA-binding transcription factor binding"/>
    <property type="evidence" value="ECO:0000353"/>
    <property type="project" value="UniProtKB"/>
</dbReference>
<dbReference type="GO" id="GO:0042802">
    <property type="term" value="F:identical protein binding"/>
    <property type="evidence" value="ECO:0000353"/>
    <property type="project" value="IntAct"/>
</dbReference>
<dbReference type="GO" id="GO:0003714">
    <property type="term" value="F:transcription corepressor activity"/>
    <property type="evidence" value="ECO:0000314"/>
    <property type="project" value="BHF-UCL"/>
</dbReference>
<dbReference type="GO" id="GO:0009887">
    <property type="term" value="P:animal organ morphogenesis"/>
    <property type="evidence" value="ECO:0000304"/>
    <property type="project" value="ProtInc"/>
</dbReference>
<dbReference type="GO" id="GO:2000811">
    <property type="term" value="P:negative regulation of anoikis"/>
    <property type="evidence" value="ECO:0000315"/>
    <property type="project" value="UniProtKB"/>
</dbReference>
<dbReference type="GO" id="GO:0043124">
    <property type="term" value="P:negative regulation of canonical NF-kappaB signal transduction"/>
    <property type="evidence" value="ECO:0000314"/>
    <property type="project" value="UniProtKB"/>
</dbReference>
<dbReference type="GO" id="GO:0090090">
    <property type="term" value="P:negative regulation of canonical Wnt signaling pathway"/>
    <property type="evidence" value="ECO:0000318"/>
    <property type="project" value="GO_Central"/>
</dbReference>
<dbReference type="GO" id="GO:0045892">
    <property type="term" value="P:negative regulation of DNA-templated transcription"/>
    <property type="evidence" value="ECO:0000314"/>
    <property type="project" value="UniProtKB"/>
</dbReference>
<dbReference type="GO" id="GO:0030178">
    <property type="term" value="P:negative regulation of Wnt signaling pathway"/>
    <property type="evidence" value="ECO:0000314"/>
    <property type="project" value="UniProtKB"/>
</dbReference>
<dbReference type="GO" id="GO:0010628">
    <property type="term" value="P:positive regulation of gene expression"/>
    <property type="evidence" value="ECO:0000315"/>
    <property type="project" value="UniProtKB"/>
</dbReference>
<dbReference type="GO" id="GO:0007165">
    <property type="term" value="P:signal transduction"/>
    <property type="evidence" value="ECO:0000304"/>
    <property type="project" value="ProtInc"/>
</dbReference>
<dbReference type="GO" id="GO:0016055">
    <property type="term" value="P:Wnt signaling pathway"/>
    <property type="evidence" value="ECO:0007669"/>
    <property type="project" value="UniProtKB-KW"/>
</dbReference>
<dbReference type="CDD" id="cd00200">
    <property type="entry name" value="WD40"/>
    <property type="match status" value="1"/>
</dbReference>
<dbReference type="FunFam" id="2.130.10.10:FF:000001">
    <property type="entry name" value="transducin-like enhancer protein 3 isoform X1"/>
    <property type="match status" value="1"/>
</dbReference>
<dbReference type="Gene3D" id="2.130.10.10">
    <property type="entry name" value="YVTN repeat-like/Quinoprotein amine dehydrogenase"/>
    <property type="match status" value="1"/>
</dbReference>
<dbReference type="IDEAL" id="IID00208"/>
<dbReference type="InterPro" id="IPR005617">
    <property type="entry name" value="Groucho/TLE_N"/>
</dbReference>
<dbReference type="InterPro" id="IPR009146">
    <property type="entry name" value="Groucho_enhance"/>
</dbReference>
<dbReference type="InterPro" id="IPR015943">
    <property type="entry name" value="WD40/YVTN_repeat-like_dom_sf"/>
</dbReference>
<dbReference type="InterPro" id="IPR019775">
    <property type="entry name" value="WD40_repeat_CS"/>
</dbReference>
<dbReference type="InterPro" id="IPR036322">
    <property type="entry name" value="WD40_repeat_dom_sf"/>
</dbReference>
<dbReference type="InterPro" id="IPR001680">
    <property type="entry name" value="WD40_rpt"/>
</dbReference>
<dbReference type="PANTHER" id="PTHR10814">
    <property type="entry name" value="TRANSDUCIN-LIKE ENHANCER PROTEIN"/>
    <property type="match status" value="1"/>
</dbReference>
<dbReference type="PANTHER" id="PTHR10814:SF29">
    <property type="entry name" value="TRANSDUCIN-LIKE ENHANCER PROTEIN 1"/>
    <property type="match status" value="1"/>
</dbReference>
<dbReference type="Pfam" id="PF03920">
    <property type="entry name" value="TLE_N"/>
    <property type="match status" value="1"/>
</dbReference>
<dbReference type="Pfam" id="PF00400">
    <property type="entry name" value="WD40"/>
    <property type="match status" value="6"/>
</dbReference>
<dbReference type="PRINTS" id="PR01850">
    <property type="entry name" value="GROUCHOFAMLY"/>
</dbReference>
<dbReference type="SMART" id="SM00320">
    <property type="entry name" value="WD40"/>
    <property type="match status" value="7"/>
</dbReference>
<dbReference type="SUPFAM" id="SSF50978">
    <property type="entry name" value="WD40 repeat-like"/>
    <property type="match status" value="1"/>
</dbReference>
<dbReference type="PROSITE" id="PS00678">
    <property type="entry name" value="WD_REPEATS_1"/>
    <property type="match status" value="2"/>
</dbReference>
<dbReference type="PROSITE" id="PS50082">
    <property type="entry name" value="WD_REPEATS_2"/>
    <property type="match status" value="2"/>
</dbReference>
<dbReference type="PROSITE" id="PS50294">
    <property type="entry name" value="WD_REPEATS_REGION"/>
    <property type="match status" value="2"/>
</dbReference>
<protein>
    <recommendedName>
        <fullName>Transducin-like enhancer protein 1</fullName>
    </recommendedName>
    <alternativeName>
        <fullName>E(Sp1) homolog</fullName>
    </alternativeName>
    <alternativeName>
        <fullName>Enhancer of split groucho-like protein 1</fullName>
        <shortName>ESG1</shortName>
    </alternativeName>
</protein>
<organism>
    <name type="scientific">Homo sapiens</name>
    <name type="common">Human</name>
    <dbReference type="NCBI Taxonomy" id="9606"/>
    <lineage>
        <taxon>Eukaryota</taxon>
        <taxon>Metazoa</taxon>
        <taxon>Chordata</taxon>
        <taxon>Craniata</taxon>
        <taxon>Vertebrata</taxon>
        <taxon>Euteleostomi</taxon>
        <taxon>Mammalia</taxon>
        <taxon>Eutheria</taxon>
        <taxon>Euarchontoglires</taxon>
        <taxon>Primates</taxon>
        <taxon>Haplorrhini</taxon>
        <taxon>Catarrhini</taxon>
        <taxon>Hominidae</taxon>
        <taxon>Homo</taxon>
    </lineage>
</organism>
<reference key="1">
    <citation type="journal article" date="1992" name="Nat. Genet.">
        <title>Human homologs of a Drosophila enhancer of split gene product define a novel family of nuclear proteins.</title>
        <authorList>
            <person name="Stifani S."/>
            <person name="Blaumueller C.M."/>
            <person name="Redhead N.J."/>
            <person name="Hill R.E."/>
            <person name="Artavanis-Tsakonas S."/>
        </authorList>
    </citation>
    <scope>NUCLEOTIDE SEQUENCE [MRNA]</scope>
    <source>
        <tissue>Fetal brain</tissue>
    </source>
</reference>
<reference key="2">
    <citation type="journal article" date="2004" name="Nat. Genet.">
        <title>Complete sequencing and characterization of 21,243 full-length human cDNAs.</title>
        <authorList>
            <person name="Ota T."/>
            <person name="Suzuki Y."/>
            <person name="Nishikawa T."/>
            <person name="Otsuki T."/>
            <person name="Sugiyama T."/>
            <person name="Irie R."/>
            <person name="Wakamatsu A."/>
            <person name="Hayashi K."/>
            <person name="Sato H."/>
            <person name="Nagai K."/>
            <person name="Kimura K."/>
            <person name="Makita H."/>
            <person name="Sekine M."/>
            <person name="Obayashi M."/>
            <person name="Nishi T."/>
            <person name="Shibahara T."/>
            <person name="Tanaka T."/>
            <person name="Ishii S."/>
            <person name="Yamamoto J."/>
            <person name="Saito K."/>
            <person name="Kawai Y."/>
            <person name="Isono Y."/>
            <person name="Nakamura Y."/>
            <person name="Nagahari K."/>
            <person name="Murakami K."/>
            <person name="Yasuda T."/>
            <person name="Iwayanagi T."/>
            <person name="Wagatsuma M."/>
            <person name="Shiratori A."/>
            <person name="Sudo H."/>
            <person name="Hosoiri T."/>
            <person name="Kaku Y."/>
            <person name="Kodaira H."/>
            <person name="Kondo H."/>
            <person name="Sugawara M."/>
            <person name="Takahashi M."/>
            <person name="Kanda K."/>
            <person name="Yokoi T."/>
            <person name="Furuya T."/>
            <person name="Kikkawa E."/>
            <person name="Omura Y."/>
            <person name="Abe K."/>
            <person name="Kamihara K."/>
            <person name="Katsuta N."/>
            <person name="Sato K."/>
            <person name="Tanikawa M."/>
            <person name="Yamazaki M."/>
            <person name="Ninomiya K."/>
            <person name="Ishibashi T."/>
            <person name="Yamashita H."/>
            <person name="Murakawa K."/>
            <person name="Fujimori K."/>
            <person name="Tanai H."/>
            <person name="Kimata M."/>
            <person name="Watanabe M."/>
            <person name="Hiraoka S."/>
            <person name="Chiba Y."/>
            <person name="Ishida S."/>
            <person name="Ono Y."/>
            <person name="Takiguchi S."/>
            <person name="Watanabe S."/>
            <person name="Yosida M."/>
            <person name="Hotuta T."/>
            <person name="Kusano J."/>
            <person name="Kanehori K."/>
            <person name="Takahashi-Fujii A."/>
            <person name="Hara H."/>
            <person name="Tanase T.-O."/>
            <person name="Nomura Y."/>
            <person name="Togiya S."/>
            <person name="Komai F."/>
            <person name="Hara R."/>
            <person name="Takeuchi K."/>
            <person name="Arita M."/>
            <person name="Imose N."/>
            <person name="Musashino K."/>
            <person name="Yuuki H."/>
            <person name="Oshima A."/>
            <person name="Sasaki N."/>
            <person name="Aotsuka S."/>
            <person name="Yoshikawa Y."/>
            <person name="Matsunawa H."/>
            <person name="Ichihara T."/>
            <person name="Shiohata N."/>
            <person name="Sano S."/>
            <person name="Moriya S."/>
            <person name="Momiyama H."/>
            <person name="Satoh N."/>
            <person name="Takami S."/>
            <person name="Terashima Y."/>
            <person name="Suzuki O."/>
            <person name="Nakagawa S."/>
            <person name="Senoh A."/>
            <person name="Mizoguchi H."/>
            <person name="Goto Y."/>
            <person name="Shimizu F."/>
            <person name="Wakebe H."/>
            <person name="Hishigaki H."/>
            <person name="Watanabe T."/>
            <person name="Sugiyama A."/>
            <person name="Takemoto M."/>
            <person name="Kawakami B."/>
            <person name="Yamazaki M."/>
            <person name="Watanabe K."/>
            <person name="Kumagai A."/>
            <person name="Itakura S."/>
            <person name="Fukuzumi Y."/>
            <person name="Fujimori Y."/>
            <person name="Komiyama M."/>
            <person name="Tashiro H."/>
            <person name="Tanigami A."/>
            <person name="Fujiwara T."/>
            <person name="Ono T."/>
            <person name="Yamada K."/>
            <person name="Fujii Y."/>
            <person name="Ozaki K."/>
            <person name="Hirao M."/>
            <person name="Ohmori Y."/>
            <person name="Kawabata A."/>
            <person name="Hikiji T."/>
            <person name="Kobatake N."/>
            <person name="Inagaki H."/>
            <person name="Ikema Y."/>
            <person name="Okamoto S."/>
            <person name="Okitani R."/>
            <person name="Kawakami T."/>
            <person name="Noguchi S."/>
            <person name="Itoh T."/>
            <person name="Shigeta K."/>
            <person name="Senba T."/>
            <person name="Matsumura K."/>
            <person name="Nakajima Y."/>
            <person name="Mizuno T."/>
            <person name="Morinaga M."/>
            <person name="Sasaki M."/>
            <person name="Togashi T."/>
            <person name="Oyama M."/>
            <person name="Hata H."/>
            <person name="Watanabe M."/>
            <person name="Komatsu T."/>
            <person name="Mizushima-Sugano J."/>
            <person name="Satoh T."/>
            <person name="Shirai Y."/>
            <person name="Takahashi Y."/>
            <person name="Nakagawa K."/>
            <person name="Okumura K."/>
            <person name="Nagase T."/>
            <person name="Nomura N."/>
            <person name="Kikuchi H."/>
            <person name="Masuho Y."/>
            <person name="Yamashita R."/>
            <person name="Nakai K."/>
            <person name="Yada T."/>
            <person name="Nakamura Y."/>
            <person name="Ohara O."/>
            <person name="Isogai T."/>
            <person name="Sugano S."/>
        </authorList>
    </citation>
    <scope>NUCLEOTIDE SEQUENCE [LARGE SCALE MRNA]</scope>
    <source>
        <tissue>Mammary gland</tissue>
    </source>
</reference>
<reference key="3">
    <citation type="journal article" date="2004" name="Nature">
        <title>DNA sequence and analysis of human chromosome 9.</title>
        <authorList>
            <person name="Humphray S.J."/>
            <person name="Oliver K."/>
            <person name="Hunt A.R."/>
            <person name="Plumb R.W."/>
            <person name="Loveland J.E."/>
            <person name="Howe K.L."/>
            <person name="Andrews T.D."/>
            <person name="Searle S."/>
            <person name="Hunt S.E."/>
            <person name="Scott C.E."/>
            <person name="Jones M.C."/>
            <person name="Ainscough R."/>
            <person name="Almeida J.P."/>
            <person name="Ambrose K.D."/>
            <person name="Ashwell R.I.S."/>
            <person name="Babbage A.K."/>
            <person name="Babbage S."/>
            <person name="Bagguley C.L."/>
            <person name="Bailey J."/>
            <person name="Banerjee R."/>
            <person name="Barker D.J."/>
            <person name="Barlow K.F."/>
            <person name="Bates K."/>
            <person name="Beasley H."/>
            <person name="Beasley O."/>
            <person name="Bird C.P."/>
            <person name="Bray-Allen S."/>
            <person name="Brown A.J."/>
            <person name="Brown J.Y."/>
            <person name="Burford D."/>
            <person name="Burrill W."/>
            <person name="Burton J."/>
            <person name="Carder C."/>
            <person name="Carter N.P."/>
            <person name="Chapman J.C."/>
            <person name="Chen Y."/>
            <person name="Clarke G."/>
            <person name="Clark S.Y."/>
            <person name="Clee C.M."/>
            <person name="Clegg S."/>
            <person name="Collier R.E."/>
            <person name="Corby N."/>
            <person name="Crosier M."/>
            <person name="Cummings A.T."/>
            <person name="Davies J."/>
            <person name="Dhami P."/>
            <person name="Dunn M."/>
            <person name="Dutta I."/>
            <person name="Dyer L.W."/>
            <person name="Earthrowl M.E."/>
            <person name="Faulkner L."/>
            <person name="Fleming C.J."/>
            <person name="Frankish A."/>
            <person name="Frankland J.A."/>
            <person name="French L."/>
            <person name="Fricker D.G."/>
            <person name="Garner P."/>
            <person name="Garnett J."/>
            <person name="Ghori J."/>
            <person name="Gilbert J.G.R."/>
            <person name="Glison C."/>
            <person name="Grafham D.V."/>
            <person name="Gribble S."/>
            <person name="Griffiths C."/>
            <person name="Griffiths-Jones S."/>
            <person name="Grocock R."/>
            <person name="Guy J."/>
            <person name="Hall R.E."/>
            <person name="Hammond S."/>
            <person name="Harley J.L."/>
            <person name="Harrison E.S.I."/>
            <person name="Hart E.A."/>
            <person name="Heath P.D."/>
            <person name="Henderson C.D."/>
            <person name="Hopkins B.L."/>
            <person name="Howard P.J."/>
            <person name="Howden P.J."/>
            <person name="Huckle E."/>
            <person name="Johnson C."/>
            <person name="Johnson D."/>
            <person name="Joy A.A."/>
            <person name="Kay M."/>
            <person name="Keenan S."/>
            <person name="Kershaw J.K."/>
            <person name="Kimberley A.M."/>
            <person name="King A."/>
            <person name="Knights A."/>
            <person name="Laird G.K."/>
            <person name="Langford C."/>
            <person name="Lawlor S."/>
            <person name="Leongamornlert D.A."/>
            <person name="Leversha M."/>
            <person name="Lloyd C."/>
            <person name="Lloyd D.M."/>
            <person name="Lovell J."/>
            <person name="Martin S."/>
            <person name="Mashreghi-Mohammadi M."/>
            <person name="Matthews L."/>
            <person name="McLaren S."/>
            <person name="McLay K.E."/>
            <person name="McMurray A."/>
            <person name="Milne S."/>
            <person name="Nickerson T."/>
            <person name="Nisbett J."/>
            <person name="Nordsiek G."/>
            <person name="Pearce A.V."/>
            <person name="Peck A.I."/>
            <person name="Porter K.M."/>
            <person name="Pandian R."/>
            <person name="Pelan S."/>
            <person name="Phillimore B."/>
            <person name="Povey S."/>
            <person name="Ramsey Y."/>
            <person name="Rand V."/>
            <person name="Scharfe M."/>
            <person name="Sehra H.K."/>
            <person name="Shownkeen R."/>
            <person name="Sims S.K."/>
            <person name="Skuce C.D."/>
            <person name="Smith M."/>
            <person name="Steward C.A."/>
            <person name="Swarbreck D."/>
            <person name="Sycamore N."/>
            <person name="Tester J."/>
            <person name="Thorpe A."/>
            <person name="Tracey A."/>
            <person name="Tromans A."/>
            <person name="Thomas D.W."/>
            <person name="Wall M."/>
            <person name="Wallis J.M."/>
            <person name="West A.P."/>
            <person name="Whitehead S.L."/>
            <person name="Willey D.L."/>
            <person name="Williams S.A."/>
            <person name="Wilming L."/>
            <person name="Wray P.W."/>
            <person name="Young L."/>
            <person name="Ashurst J.L."/>
            <person name="Coulson A."/>
            <person name="Blocker H."/>
            <person name="Durbin R.M."/>
            <person name="Sulston J.E."/>
            <person name="Hubbard T."/>
            <person name="Jackson M.J."/>
            <person name="Bentley D.R."/>
            <person name="Beck S."/>
            <person name="Rogers J."/>
            <person name="Dunham I."/>
        </authorList>
    </citation>
    <scope>NUCLEOTIDE SEQUENCE [LARGE SCALE GENOMIC DNA]</scope>
</reference>
<reference key="4">
    <citation type="submission" date="2005-07" db="EMBL/GenBank/DDBJ databases">
        <authorList>
            <person name="Mural R.J."/>
            <person name="Istrail S."/>
            <person name="Sutton G.G."/>
            <person name="Florea L."/>
            <person name="Halpern A.L."/>
            <person name="Mobarry C.M."/>
            <person name="Lippert R."/>
            <person name="Walenz B."/>
            <person name="Shatkay H."/>
            <person name="Dew I."/>
            <person name="Miller J.R."/>
            <person name="Flanigan M.J."/>
            <person name="Edwards N.J."/>
            <person name="Bolanos R."/>
            <person name="Fasulo D."/>
            <person name="Halldorsson B.V."/>
            <person name="Hannenhalli S."/>
            <person name="Turner R."/>
            <person name="Yooseph S."/>
            <person name="Lu F."/>
            <person name="Nusskern D.R."/>
            <person name="Shue B.C."/>
            <person name="Zheng X.H."/>
            <person name="Zhong F."/>
            <person name="Delcher A.L."/>
            <person name="Huson D.H."/>
            <person name="Kravitz S.A."/>
            <person name="Mouchard L."/>
            <person name="Reinert K."/>
            <person name="Remington K.A."/>
            <person name="Clark A.G."/>
            <person name="Waterman M.S."/>
            <person name="Eichler E.E."/>
            <person name="Adams M.D."/>
            <person name="Hunkapiller M.W."/>
            <person name="Myers E.W."/>
            <person name="Venter J.C."/>
        </authorList>
    </citation>
    <scope>NUCLEOTIDE SEQUENCE [LARGE SCALE GENOMIC DNA]</scope>
</reference>
<reference key="5">
    <citation type="journal article" date="2004" name="Genome Res.">
        <title>The status, quality, and expansion of the NIH full-length cDNA project: the Mammalian Gene Collection (MGC).</title>
        <authorList>
            <consortium name="The MGC Project Team"/>
        </authorList>
    </citation>
    <scope>NUCLEOTIDE SEQUENCE [LARGE SCALE MRNA]</scope>
    <source>
        <tissue>Colon</tissue>
        <tissue>Kidney</tissue>
    </source>
</reference>
<reference key="6">
    <citation type="journal article" date="2000" name="J. Biol. Chem.">
        <title>Transducin-like enhancer of split proteins, the human homologs of Drosophila groucho, interact with hepatic nuclear factor 3beta.</title>
        <authorList>
            <person name="Wang J.-C."/>
            <person name="Waltner-Law M."/>
            <person name="Yamada K."/>
            <person name="Osawa H."/>
            <person name="Stifani S."/>
            <person name="Granner D.K."/>
        </authorList>
    </citation>
    <scope>PROTEIN SEQUENCE OF 727-739</scope>
    <scope>INTERACTION WITH FOXA2</scope>
    <scope>MODULATION BY AES</scope>
</reference>
<reference key="7">
    <citation type="journal article" date="1996" name="Biochem. Biophys. Res. Commun.">
        <title>Molecular interaction between TLE1 and the carboxyl-terminal domain of HES-1 containing the WRPW motif.</title>
        <authorList>
            <person name="Grbavec D."/>
            <person name="Stifani S."/>
        </authorList>
    </citation>
    <scope>INTERACTION WITH TLE1</scope>
</reference>
<reference key="8">
    <citation type="journal article" date="1996" name="Mol. Cell. Biol.">
        <title>The WRPW motif of the hairy-related basic helix-loop-helix repressor proteins acts as a 4-amino-acid transcription repression and protein-protein interaction domain.</title>
        <authorList>
            <person name="Fisher A.L."/>
            <person name="Ohsako S."/>
            <person name="Caudy M."/>
        </authorList>
    </citation>
    <scope>INTERACTION WITH HES1</scope>
</reference>
<reference key="9">
    <citation type="journal article" date="1997" name="J. Biol. Chem.">
        <title>The Groucho/transducin-like enhancer of split transcriptional repressors interact with the genetically defined amino-terminal silencing domain of histone H3.</title>
        <authorList>
            <person name="Palaparti A."/>
            <person name="Baratz A."/>
            <person name="Stifani S."/>
        </authorList>
    </citation>
    <scope>OLIGOMERIZATION</scope>
    <scope>ASSOCIATION WITH CHROMATIN</scope>
    <scope>INTERACTION WITH HISTONE H3</scope>
</reference>
<reference key="10">
    <citation type="journal article" date="1998" name="Eur. J. Biochem.">
        <title>Transducin-like Enhancer of split 2, a mammalian homologue of Drosophila Groucho, acts as a transcriptional repressor, interacts with Hairy/Enhancer of split proteins, and is expressed during neuronal development.</title>
        <authorList>
            <person name="Grbavec D."/>
            <person name="Lo R."/>
            <person name="Liu Y."/>
            <person name="Stifani S."/>
        </authorList>
    </citation>
    <scope>OLIGOMERIZATION</scope>
    <scope>INTERACTION WITH HES1</scope>
</reference>
<reference key="11">
    <citation type="journal article" date="1998" name="Proc. Natl. Acad. Sci. U.S.A.">
        <title>Transcriptional repression by AML1 and LEF-1 is mediated by the TLE/Groucho corepressors.</title>
        <authorList>
            <person name="Levanon D."/>
            <person name="Goldstein R.E."/>
            <person name="Bernstein Y."/>
            <person name="Tang H."/>
            <person name="Goldenberg D."/>
            <person name="Stifani S."/>
            <person name="Paroush Z."/>
            <person name="Groner Y."/>
        </authorList>
    </citation>
    <scope>INTERACTION WITH RUNX1; RUNX3 AND LEF1</scope>
</reference>
<reference key="12">
    <citation type="journal article" date="1999" name="Biochem. J.">
        <title>Groucho/transducin-like enhancer of split (TLE) family members interact with the yeast transcriptional co-repressor SSN6 and mammalian SSN6-related proteins: implications for evolutionary conservation of transcription repression mechanisms.</title>
        <authorList>
            <person name="Grbavec D."/>
            <person name="Lo R."/>
            <person name="Liu Y."/>
            <person name="Greenfield A."/>
            <person name="Stifani S."/>
        </authorList>
    </citation>
    <scope>INTERACTION WITH KDM6A AND UTY</scope>
</reference>
<reference key="13">
    <citation type="journal article" date="2000" name="J. Biol. Chem.">
        <title>Inhibition of nuclear factor-kappaB-mediated transcription by association with the amino-terminal enhancer of split, a Groucho-related protein lacking WD40 repeats.</title>
        <authorList>
            <person name="Tetsuka T."/>
            <person name="Uranishi H."/>
            <person name="Imai H."/>
            <person name="Ono T."/>
            <person name="Sonta S."/>
            <person name="Takahashi N."/>
            <person name="Asamitsu K."/>
            <person name="Okamoto T."/>
        </authorList>
    </citation>
    <scope>FUNCTION</scope>
    <scope>INTERACTION WITH RELA</scope>
</reference>
<reference key="14">
    <citation type="journal article" date="2001" name="Genes Dev.">
        <title>Temporal regulation of a paired-like homeodomain repressor/TLE corepressor complex and a related activator is required for pituitary organogenesis.</title>
        <authorList>
            <person name="Dasen J.S."/>
            <person name="Martinez-Barbera J.-P."/>
            <person name="Herman T.S."/>
            <person name="O'Connell S."/>
            <person name="Olson L."/>
            <person name="Ju B."/>
            <person name="Tollkuhn J."/>
            <person name="Baek S.H."/>
            <person name="Rose D.W."/>
            <person name="Rosenfeld M.G."/>
        </authorList>
    </citation>
    <scope>INTERACTION WITH HESX1</scope>
    <scope>MUTAGENESIS OF VAL-486; TYR-532; LEU-702 AND SER-715</scope>
</reference>
<reference key="15">
    <citation type="journal article" date="2002" name="J. Biol. Chem.">
        <title>A role for cell cycle-regulated phosphorylation in Groucho-mediated transcriptional repression.</title>
        <authorList>
            <person name="Nuthall H.N."/>
            <person name="Joachim K."/>
            <person name="Palaparti A."/>
            <person name="Stifani S."/>
        </authorList>
    </citation>
    <scope>SUBCELLULAR LOCATION</scope>
    <scope>DEGREE OF PHOSPHORYLATION</scope>
</reference>
<reference key="16">
    <citation type="journal article" date="2003" name="Biochem. Biophys. Res. Commun.">
        <title>Identification of PNRC2 and TLE1 as activation function-1 cofactors of the orphan nuclear receptor ERRgamma.</title>
        <authorList>
            <person name="Hentschke M."/>
            <person name="Borgmeyer U."/>
        </authorList>
    </citation>
    <scope>INTERACTION WITH ESRRG</scope>
</reference>
<reference key="17">
    <citation type="journal article" date="2003" name="Development">
        <title>Six3 and Six6 activity is modulated by members of the groucho family.</title>
        <authorList>
            <person name="Lopez-Rios J."/>
            <person name="Tessmar K."/>
            <person name="Loosli F."/>
            <person name="Wittbrodt J."/>
            <person name="Bovolenta P."/>
        </authorList>
    </citation>
    <scope>INTERACTION WITH SIX3</scope>
</reference>
<reference key="18">
    <citation type="journal article" date="2008" name="Genome Biol.">
        <title>The Groucho/TLE/Grg family of transcriptional co-repressors.</title>
        <authorList>
            <person name="Jennings B.H."/>
            <person name="Ish-Horowicz D."/>
        </authorList>
    </citation>
    <scope>REVIEW</scope>
</reference>
<reference key="19">
    <citation type="journal article" date="2009" name="Anal. Chem.">
        <title>Lys-N and trypsin cover complementary parts of the phosphoproteome in a refined SCX-based approach.</title>
        <authorList>
            <person name="Gauci S."/>
            <person name="Helbig A.O."/>
            <person name="Slijper M."/>
            <person name="Krijgsveld J."/>
            <person name="Heck A.J."/>
            <person name="Mohammed S."/>
        </authorList>
    </citation>
    <scope>IDENTIFICATION BY MASS SPECTROMETRY [LARGE SCALE ANALYSIS]</scope>
</reference>
<reference key="20">
    <citation type="journal article" date="2009" name="Sci. Signal.">
        <title>Quantitative phosphoproteomic analysis of T cell receptor signaling reveals system-wide modulation of protein-protein interactions.</title>
        <authorList>
            <person name="Mayya V."/>
            <person name="Lundgren D.H."/>
            <person name="Hwang S.-I."/>
            <person name="Rezaul K."/>
            <person name="Wu L."/>
            <person name="Eng J.K."/>
            <person name="Rodionov V."/>
            <person name="Han D.K."/>
        </authorList>
    </citation>
    <scope>IDENTIFICATION BY MASS SPECTROMETRY [LARGE SCALE ANALYSIS]</scope>
    <source>
        <tissue>Leukemic T-cell</tissue>
    </source>
</reference>
<reference key="21">
    <citation type="journal article" date="2011" name="BMB Rep.">
        <title>EphrinB1 interacts with the transcriptional co-repressor Groucho/xTLE4.</title>
        <authorList>
            <person name="Kamata T."/>
            <person name="Bong Y.S."/>
            <person name="Mood K."/>
            <person name="Park M.J."/>
            <person name="Nishanian T.G."/>
            <person name="Lee H.S."/>
        </authorList>
    </citation>
    <scope>INTERACTION WITH EFNB1</scope>
</reference>
<reference key="22">
    <citation type="journal article" date="2011" name="BMC Syst. Biol.">
        <title>Initial characterization of the human central proteome.</title>
        <authorList>
            <person name="Burkard T.R."/>
            <person name="Planyavsky M."/>
            <person name="Kaupe I."/>
            <person name="Breitwieser F.P."/>
            <person name="Buerckstuemmer T."/>
            <person name="Bennett K.L."/>
            <person name="Superti-Furga G."/>
            <person name="Colinge J."/>
        </authorList>
    </citation>
    <scope>IDENTIFICATION BY MASS SPECTROMETRY [LARGE SCALE ANALYSIS]</scope>
</reference>
<reference key="23">
    <citation type="journal article" date="2011" name="Sci. Signal.">
        <title>System-wide temporal characterization of the proteome and phosphoproteome of human embryonic stem cell differentiation.</title>
        <authorList>
            <person name="Rigbolt K.T."/>
            <person name="Prokhorova T.A."/>
            <person name="Akimov V."/>
            <person name="Henningsen J."/>
            <person name="Johansen P.T."/>
            <person name="Kratchmarova I."/>
            <person name="Kassem M."/>
            <person name="Mann M."/>
            <person name="Olsen J.V."/>
            <person name="Blagoev B."/>
        </authorList>
    </citation>
    <scope>PHOSPHORYLATION [LARGE SCALE ANALYSIS] AT SER-239 AND SER-286</scope>
    <scope>IDENTIFICATION BY MASS SPECTROMETRY [LARGE SCALE ANALYSIS]</scope>
</reference>
<reference key="24">
    <citation type="journal article" date="2012" name="Mol. Cell">
        <title>XIAP monoubiquitylates Groucho/TLE to promote canonical Wnt signaling.</title>
        <authorList>
            <person name="Hanson A.J."/>
            <person name="Wallace H.A."/>
            <person name="Freeman T.J."/>
            <person name="Beauchamp R.D."/>
            <person name="Lee L.A."/>
            <person name="Lee E."/>
        </authorList>
    </citation>
    <scope>UBIQUITINATION BY XIAP/BIRC4</scope>
</reference>
<reference key="25">
    <citation type="journal article" date="2002" name="Structure">
        <title>Crystal structure of the C-terminal WD40 repeat domain of the human Groucho/TLE1 transcriptional corepressor.</title>
        <authorList>
            <person name="Pickles L.M."/>
            <person name="Roe S.M."/>
            <person name="Hemingway E.J."/>
            <person name="Stifani S."/>
            <person name="Pearl L.H."/>
        </authorList>
    </citation>
    <scope>X-RAY CRYSTALLOGRAPHY (1.6 ANGSTROMS) OF 443-770</scope>
</reference>
<evidence type="ECO:0000250" key="1">
    <source>
        <dbReference type="UniProtKB" id="Q62440"/>
    </source>
</evidence>
<evidence type="ECO:0000255" key="2"/>
<evidence type="ECO:0000256" key="3">
    <source>
        <dbReference type="SAM" id="MobiDB-lite"/>
    </source>
</evidence>
<evidence type="ECO:0000269" key="4">
    <source>
    </source>
</evidence>
<evidence type="ECO:0000269" key="5">
    <source>
    </source>
</evidence>
<evidence type="ECO:0000269" key="6">
    <source>
    </source>
</evidence>
<evidence type="ECO:0000269" key="7">
    <source>
    </source>
</evidence>
<evidence type="ECO:0000269" key="8">
    <source>
    </source>
</evidence>
<evidence type="ECO:0000269" key="9">
    <source>
    </source>
</evidence>
<evidence type="ECO:0000269" key="10">
    <source>
    </source>
</evidence>
<evidence type="ECO:0000269" key="11">
    <source>
    </source>
</evidence>
<evidence type="ECO:0000269" key="12">
    <source>
    </source>
</evidence>
<evidence type="ECO:0000269" key="13">
    <source>
    </source>
</evidence>
<evidence type="ECO:0000269" key="14">
    <source>
    </source>
</evidence>
<evidence type="ECO:0000269" key="15">
    <source>
    </source>
</evidence>
<evidence type="ECO:0000269" key="16">
    <source>
    </source>
</evidence>
<evidence type="ECO:0000269" key="17">
    <source>
    </source>
</evidence>
<evidence type="ECO:0000305" key="18"/>
<evidence type="ECO:0000305" key="19">
    <source>
    </source>
</evidence>
<evidence type="ECO:0000305" key="20">
    <source>
    </source>
</evidence>
<evidence type="ECO:0007744" key="21">
    <source>
    </source>
</evidence>
<evidence type="ECO:0007829" key="22">
    <source>
        <dbReference type="PDB" id="1GXR"/>
    </source>
</evidence>
<evidence type="ECO:0007829" key="23">
    <source>
        <dbReference type="PDB" id="2CE8"/>
    </source>
</evidence>
<evidence type="ECO:0007829" key="24">
    <source>
        <dbReference type="PDB" id="4OM3"/>
    </source>
</evidence>